<proteinExistence type="inferred from homology"/>
<reference key="1">
    <citation type="journal article" date="2009" name="PLoS Pathog.">
        <title>Genomic evidence for the evolution of Streptococcus equi: host restriction, increased virulence, and genetic exchange with human pathogens.</title>
        <authorList>
            <person name="Holden M.T.G."/>
            <person name="Heather Z."/>
            <person name="Paillot R."/>
            <person name="Steward K.F."/>
            <person name="Webb K."/>
            <person name="Ainslie F."/>
            <person name="Jourdan T."/>
            <person name="Bason N.C."/>
            <person name="Holroyd N.E."/>
            <person name="Mungall K."/>
            <person name="Quail M.A."/>
            <person name="Sanders M."/>
            <person name="Simmonds M."/>
            <person name="Willey D."/>
            <person name="Brooks K."/>
            <person name="Aanensen D.M."/>
            <person name="Spratt B.G."/>
            <person name="Jolley K.A."/>
            <person name="Maiden M.C.J."/>
            <person name="Kehoe M."/>
            <person name="Chanter N."/>
            <person name="Bentley S.D."/>
            <person name="Robinson C."/>
            <person name="Maskell D.J."/>
            <person name="Parkhill J."/>
            <person name="Waller A.S."/>
        </authorList>
    </citation>
    <scope>NUCLEOTIDE SEQUENCE [LARGE SCALE GENOMIC DNA]</scope>
    <source>
        <strain>H70</strain>
    </source>
</reference>
<organism>
    <name type="scientific">Streptococcus equi subsp. zooepidemicus (strain H70)</name>
    <dbReference type="NCBI Taxonomy" id="553483"/>
    <lineage>
        <taxon>Bacteria</taxon>
        <taxon>Bacillati</taxon>
        <taxon>Bacillota</taxon>
        <taxon>Bacilli</taxon>
        <taxon>Lactobacillales</taxon>
        <taxon>Streptococcaceae</taxon>
        <taxon>Streptococcus</taxon>
    </lineage>
</organism>
<evidence type="ECO:0000255" key="1">
    <source>
        <dbReference type="HAMAP-Rule" id="MF_01445"/>
    </source>
</evidence>
<name>TSAD_STRS7</name>
<feature type="chain" id="PRO_1000215309" description="tRNA N6-adenosine threonylcarbamoyltransferase">
    <location>
        <begin position="1"/>
        <end position="338"/>
    </location>
</feature>
<feature type="binding site" evidence="1">
    <location>
        <position position="114"/>
    </location>
    <ligand>
        <name>Fe cation</name>
        <dbReference type="ChEBI" id="CHEBI:24875"/>
    </ligand>
</feature>
<feature type="binding site" evidence="1">
    <location>
        <position position="118"/>
    </location>
    <ligand>
        <name>Fe cation</name>
        <dbReference type="ChEBI" id="CHEBI:24875"/>
    </ligand>
</feature>
<feature type="binding site" evidence="1">
    <location>
        <begin position="136"/>
        <end position="140"/>
    </location>
    <ligand>
        <name>substrate</name>
    </ligand>
</feature>
<feature type="binding site" evidence="1">
    <location>
        <position position="169"/>
    </location>
    <ligand>
        <name>substrate</name>
    </ligand>
</feature>
<feature type="binding site" evidence="1">
    <location>
        <position position="182"/>
    </location>
    <ligand>
        <name>substrate</name>
    </ligand>
</feature>
<feature type="binding site" evidence="1">
    <location>
        <position position="186"/>
    </location>
    <ligand>
        <name>substrate</name>
    </ligand>
</feature>
<feature type="binding site" evidence="1">
    <location>
        <position position="275"/>
    </location>
    <ligand>
        <name>substrate</name>
    </ligand>
</feature>
<feature type="binding site" evidence="1">
    <location>
        <position position="301"/>
    </location>
    <ligand>
        <name>Fe cation</name>
        <dbReference type="ChEBI" id="CHEBI:24875"/>
    </ligand>
</feature>
<comment type="function">
    <text evidence="1">Required for the formation of a threonylcarbamoyl group on adenosine at position 37 (t(6)A37) in tRNAs that read codons beginning with adenine. Is involved in the transfer of the threonylcarbamoyl moiety of threonylcarbamoyl-AMP (TC-AMP) to the N6 group of A37, together with TsaE and TsaB. TsaD likely plays a direct catalytic role in this reaction.</text>
</comment>
<comment type="catalytic activity">
    <reaction evidence="1">
        <text>L-threonylcarbamoyladenylate + adenosine(37) in tRNA = N(6)-L-threonylcarbamoyladenosine(37) in tRNA + AMP + H(+)</text>
        <dbReference type="Rhea" id="RHEA:37059"/>
        <dbReference type="Rhea" id="RHEA-COMP:10162"/>
        <dbReference type="Rhea" id="RHEA-COMP:10163"/>
        <dbReference type="ChEBI" id="CHEBI:15378"/>
        <dbReference type="ChEBI" id="CHEBI:73682"/>
        <dbReference type="ChEBI" id="CHEBI:74411"/>
        <dbReference type="ChEBI" id="CHEBI:74418"/>
        <dbReference type="ChEBI" id="CHEBI:456215"/>
        <dbReference type="EC" id="2.3.1.234"/>
    </reaction>
</comment>
<comment type="cofactor">
    <cofactor evidence="1">
        <name>Fe(2+)</name>
        <dbReference type="ChEBI" id="CHEBI:29033"/>
    </cofactor>
    <text evidence="1">Binds 1 Fe(2+) ion per subunit.</text>
</comment>
<comment type="subcellular location">
    <subcellularLocation>
        <location evidence="1">Cytoplasm</location>
    </subcellularLocation>
</comment>
<comment type="similarity">
    <text evidence="1">Belongs to the KAE1 / TsaD family.</text>
</comment>
<sequence length="338" mass="36463">MTDRYILAVESSCDETSVAILKNDNVLLTNIIASQVESHKRFGGVVPEVASRHHVEVITTCFDDALKEAQLEASDLTAVAVTYGPGLVGALLVGLAAAKAFAWANDLPLIPVNHMAGHLMAAREQGELEYPLMALLVSGGHTELVYVTEPGEYHIVGETRDDAVGEAYDKVGRVMGLPYPAGREIDQLAHQGTDTYHFPRAMMKEDHLEFSFSGLKSAFINLHHNAQQKGEELVLEDLCASFQAAVLDILLAKTKKALKQYPSKMLVVAGGVAANQGLRERLAEEITDIAVVIPPLRLCGDNAGMIALAAVVEYEKGHVAGLDLNAKPSLAFDSFHQQ</sequence>
<dbReference type="EC" id="2.3.1.234" evidence="1"/>
<dbReference type="EMBL" id="FM204884">
    <property type="protein sequence ID" value="CAX00447.1"/>
    <property type="molecule type" value="Genomic_DNA"/>
</dbReference>
<dbReference type="SMR" id="C0MER2"/>
<dbReference type="KEGG" id="seq:SZO_16730"/>
<dbReference type="eggNOG" id="COG0533">
    <property type="taxonomic scope" value="Bacteria"/>
</dbReference>
<dbReference type="HOGENOM" id="CLU_023208_0_2_9"/>
<dbReference type="Proteomes" id="UP000001368">
    <property type="component" value="Chromosome"/>
</dbReference>
<dbReference type="GO" id="GO:0005737">
    <property type="term" value="C:cytoplasm"/>
    <property type="evidence" value="ECO:0007669"/>
    <property type="project" value="UniProtKB-SubCell"/>
</dbReference>
<dbReference type="GO" id="GO:0005506">
    <property type="term" value="F:iron ion binding"/>
    <property type="evidence" value="ECO:0007669"/>
    <property type="project" value="UniProtKB-UniRule"/>
</dbReference>
<dbReference type="GO" id="GO:0061711">
    <property type="term" value="F:N(6)-L-threonylcarbamoyladenine synthase activity"/>
    <property type="evidence" value="ECO:0007669"/>
    <property type="project" value="UniProtKB-EC"/>
</dbReference>
<dbReference type="GO" id="GO:0002949">
    <property type="term" value="P:tRNA threonylcarbamoyladenosine modification"/>
    <property type="evidence" value="ECO:0007669"/>
    <property type="project" value="UniProtKB-UniRule"/>
</dbReference>
<dbReference type="CDD" id="cd24133">
    <property type="entry name" value="ASKHA_NBD_TsaD_bac"/>
    <property type="match status" value="1"/>
</dbReference>
<dbReference type="FunFam" id="3.30.420.40:FF:000012">
    <property type="entry name" value="tRNA N6-adenosine threonylcarbamoyltransferase"/>
    <property type="match status" value="1"/>
</dbReference>
<dbReference type="FunFam" id="3.30.420.40:FF:000040">
    <property type="entry name" value="tRNA N6-adenosine threonylcarbamoyltransferase"/>
    <property type="match status" value="1"/>
</dbReference>
<dbReference type="Gene3D" id="3.30.420.40">
    <property type="match status" value="2"/>
</dbReference>
<dbReference type="HAMAP" id="MF_01445">
    <property type="entry name" value="TsaD"/>
    <property type="match status" value="1"/>
</dbReference>
<dbReference type="InterPro" id="IPR043129">
    <property type="entry name" value="ATPase_NBD"/>
</dbReference>
<dbReference type="InterPro" id="IPR000905">
    <property type="entry name" value="Gcp-like_dom"/>
</dbReference>
<dbReference type="InterPro" id="IPR017861">
    <property type="entry name" value="KAE1/TsaD"/>
</dbReference>
<dbReference type="InterPro" id="IPR022450">
    <property type="entry name" value="TsaD"/>
</dbReference>
<dbReference type="NCBIfam" id="TIGR00329">
    <property type="entry name" value="gcp_kae1"/>
    <property type="match status" value="1"/>
</dbReference>
<dbReference type="NCBIfam" id="TIGR03723">
    <property type="entry name" value="T6A_TsaD_YgjD"/>
    <property type="match status" value="1"/>
</dbReference>
<dbReference type="PANTHER" id="PTHR11735">
    <property type="entry name" value="TRNA N6-ADENOSINE THREONYLCARBAMOYLTRANSFERASE"/>
    <property type="match status" value="1"/>
</dbReference>
<dbReference type="PANTHER" id="PTHR11735:SF6">
    <property type="entry name" value="TRNA N6-ADENOSINE THREONYLCARBAMOYLTRANSFERASE, MITOCHONDRIAL"/>
    <property type="match status" value="1"/>
</dbReference>
<dbReference type="Pfam" id="PF00814">
    <property type="entry name" value="TsaD"/>
    <property type="match status" value="1"/>
</dbReference>
<dbReference type="PRINTS" id="PR00789">
    <property type="entry name" value="OSIALOPTASE"/>
</dbReference>
<dbReference type="SUPFAM" id="SSF53067">
    <property type="entry name" value="Actin-like ATPase domain"/>
    <property type="match status" value="1"/>
</dbReference>
<gene>
    <name evidence="1" type="primary">tsaD</name>
    <name type="synonym">gcp</name>
    <name type="ordered locus">SZO_16730</name>
</gene>
<accession>C0MER2</accession>
<keyword id="KW-0012">Acyltransferase</keyword>
<keyword id="KW-0963">Cytoplasm</keyword>
<keyword id="KW-0408">Iron</keyword>
<keyword id="KW-0479">Metal-binding</keyword>
<keyword id="KW-0808">Transferase</keyword>
<keyword id="KW-0819">tRNA processing</keyword>
<protein>
    <recommendedName>
        <fullName evidence="1">tRNA N6-adenosine threonylcarbamoyltransferase</fullName>
        <ecNumber evidence="1">2.3.1.234</ecNumber>
    </recommendedName>
    <alternativeName>
        <fullName evidence="1">N6-L-threonylcarbamoyladenine synthase</fullName>
        <shortName evidence="1">t(6)A synthase</shortName>
    </alternativeName>
    <alternativeName>
        <fullName evidence="1">t(6)A37 threonylcarbamoyladenosine biosynthesis protein TsaD</fullName>
    </alternativeName>
    <alternativeName>
        <fullName evidence="1">tRNA threonylcarbamoyladenosine biosynthesis protein TsaD</fullName>
    </alternativeName>
</protein>